<gene>
    <name evidence="1" type="primary">rplU</name>
    <name type="ordered locus">Tgr7_3206</name>
</gene>
<keyword id="KW-1185">Reference proteome</keyword>
<keyword id="KW-0687">Ribonucleoprotein</keyword>
<keyword id="KW-0689">Ribosomal protein</keyword>
<keyword id="KW-0694">RNA-binding</keyword>
<keyword id="KW-0699">rRNA-binding</keyword>
<dbReference type="EMBL" id="CP001339">
    <property type="protein sequence ID" value="ACL74275.1"/>
    <property type="molecule type" value="Genomic_DNA"/>
</dbReference>
<dbReference type="RefSeq" id="WP_012639737.1">
    <property type="nucleotide sequence ID" value="NC_011901.1"/>
</dbReference>
<dbReference type="SMR" id="B8GQQ1"/>
<dbReference type="STRING" id="396588.Tgr7_3206"/>
<dbReference type="KEGG" id="tgr:Tgr7_3206"/>
<dbReference type="eggNOG" id="COG0261">
    <property type="taxonomic scope" value="Bacteria"/>
</dbReference>
<dbReference type="HOGENOM" id="CLU_061463_3_2_6"/>
<dbReference type="OrthoDB" id="9813334at2"/>
<dbReference type="Proteomes" id="UP000002383">
    <property type="component" value="Chromosome"/>
</dbReference>
<dbReference type="GO" id="GO:0005737">
    <property type="term" value="C:cytoplasm"/>
    <property type="evidence" value="ECO:0007669"/>
    <property type="project" value="UniProtKB-ARBA"/>
</dbReference>
<dbReference type="GO" id="GO:1990904">
    <property type="term" value="C:ribonucleoprotein complex"/>
    <property type="evidence" value="ECO:0007669"/>
    <property type="project" value="UniProtKB-KW"/>
</dbReference>
<dbReference type="GO" id="GO:0005840">
    <property type="term" value="C:ribosome"/>
    <property type="evidence" value="ECO:0007669"/>
    <property type="project" value="UniProtKB-KW"/>
</dbReference>
<dbReference type="GO" id="GO:0019843">
    <property type="term" value="F:rRNA binding"/>
    <property type="evidence" value="ECO:0007669"/>
    <property type="project" value="UniProtKB-UniRule"/>
</dbReference>
<dbReference type="GO" id="GO:0003735">
    <property type="term" value="F:structural constituent of ribosome"/>
    <property type="evidence" value="ECO:0007669"/>
    <property type="project" value="InterPro"/>
</dbReference>
<dbReference type="GO" id="GO:0006412">
    <property type="term" value="P:translation"/>
    <property type="evidence" value="ECO:0007669"/>
    <property type="project" value="UniProtKB-UniRule"/>
</dbReference>
<dbReference type="HAMAP" id="MF_01363">
    <property type="entry name" value="Ribosomal_bL21"/>
    <property type="match status" value="1"/>
</dbReference>
<dbReference type="InterPro" id="IPR028909">
    <property type="entry name" value="bL21-like"/>
</dbReference>
<dbReference type="InterPro" id="IPR036164">
    <property type="entry name" value="bL21-like_sf"/>
</dbReference>
<dbReference type="InterPro" id="IPR001787">
    <property type="entry name" value="Ribosomal_bL21"/>
</dbReference>
<dbReference type="InterPro" id="IPR018258">
    <property type="entry name" value="Ribosomal_bL21_CS"/>
</dbReference>
<dbReference type="NCBIfam" id="TIGR00061">
    <property type="entry name" value="L21"/>
    <property type="match status" value="1"/>
</dbReference>
<dbReference type="PANTHER" id="PTHR21349">
    <property type="entry name" value="50S RIBOSOMAL PROTEIN L21"/>
    <property type="match status" value="1"/>
</dbReference>
<dbReference type="PANTHER" id="PTHR21349:SF0">
    <property type="entry name" value="LARGE RIBOSOMAL SUBUNIT PROTEIN BL21M"/>
    <property type="match status" value="1"/>
</dbReference>
<dbReference type="Pfam" id="PF00829">
    <property type="entry name" value="Ribosomal_L21p"/>
    <property type="match status" value="1"/>
</dbReference>
<dbReference type="SUPFAM" id="SSF141091">
    <property type="entry name" value="L21p-like"/>
    <property type="match status" value="1"/>
</dbReference>
<dbReference type="PROSITE" id="PS01169">
    <property type="entry name" value="RIBOSOMAL_L21"/>
    <property type="match status" value="1"/>
</dbReference>
<evidence type="ECO:0000255" key="1">
    <source>
        <dbReference type="HAMAP-Rule" id="MF_01363"/>
    </source>
</evidence>
<evidence type="ECO:0000305" key="2"/>
<sequence>MYAVIATGGKQYRVAQGDVLRVEKLDAEAGATVEFDNVLLVGSGDDVKVGTPNVEGGKVTATVKAHGRGEKVMIIKFRRRKHHRKQMGHRQDFTEVEITGISG</sequence>
<proteinExistence type="inferred from homology"/>
<organism>
    <name type="scientific">Thioalkalivibrio sulfidiphilus (strain HL-EbGR7)</name>
    <dbReference type="NCBI Taxonomy" id="396588"/>
    <lineage>
        <taxon>Bacteria</taxon>
        <taxon>Pseudomonadati</taxon>
        <taxon>Pseudomonadota</taxon>
        <taxon>Gammaproteobacteria</taxon>
        <taxon>Chromatiales</taxon>
        <taxon>Ectothiorhodospiraceae</taxon>
        <taxon>Thioalkalivibrio</taxon>
    </lineage>
</organism>
<comment type="function">
    <text evidence="1">This protein binds to 23S rRNA in the presence of protein L20.</text>
</comment>
<comment type="subunit">
    <text evidence="1">Part of the 50S ribosomal subunit. Contacts protein L20.</text>
</comment>
<comment type="similarity">
    <text evidence="1">Belongs to the bacterial ribosomal protein bL21 family.</text>
</comment>
<accession>B8GQQ1</accession>
<feature type="chain" id="PRO_1000166749" description="Large ribosomal subunit protein bL21">
    <location>
        <begin position="1"/>
        <end position="103"/>
    </location>
</feature>
<reference key="1">
    <citation type="journal article" date="2011" name="Stand. Genomic Sci.">
        <title>Complete genome sequence of 'Thioalkalivibrio sulfidophilus' HL-EbGr7.</title>
        <authorList>
            <person name="Muyzer G."/>
            <person name="Sorokin D.Y."/>
            <person name="Mavromatis K."/>
            <person name="Lapidus A."/>
            <person name="Clum A."/>
            <person name="Ivanova N."/>
            <person name="Pati A."/>
            <person name="d'Haeseleer P."/>
            <person name="Woyke T."/>
            <person name="Kyrpides N.C."/>
        </authorList>
    </citation>
    <scope>NUCLEOTIDE SEQUENCE [LARGE SCALE GENOMIC DNA]</scope>
    <source>
        <strain>HL-EbGR7</strain>
    </source>
</reference>
<name>RL21_THISH</name>
<protein>
    <recommendedName>
        <fullName evidence="1">Large ribosomal subunit protein bL21</fullName>
    </recommendedName>
    <alternativeName>
        <fullName evidence="2">50S ribosomal protein L21</fullName>
    </alternativeName>
</protein>